<organism>
    <name type="scientific">Pinus taeda</name>
    <name type="common">Loblolly pine</name>
    <dbReference type="NCBI Taxonomy" id="3352"/>
    <lineage>
        <taxon>Eukaryota</taxon>
        <taxon>Viridiplantae</taxon>
        <taxon>Streptophyta</taxon>
        <taxon>Embryophyta</taxon>
        <taxon>Tracheophyta</taxon>
        <taxon>Spermatophyta</taxon>
        <taxon>Pinopsida</taxon>
        <taxon>Pinidae</taxon>
        <taxon>Conifers I</taxon>
        <taxon>Pinales</taxon>
        <taxon>Pinaceae</taxon>
        <taxon>Pinus</taxon>
        <taxon>Pinus subgen. Pinus</taxon>
    </lineage>
</organism>
<protein>
    <recommendedName>
        <fullName>4-coumarate--CoA ligase</fullName>
        <shortName>4CL</shortName>
        <ecNumber evidence="1">6.2.1.12</ecNumber>
    </recommendedName>
    <alternativeName>
        <fullName>4-coumaroyl-CoA synthase</fullName>
    </alternativeName>
</protein>
<accession>P41636</accession>
<name>4CL_PINTA</name>
<sequence length="537" mass="58591">MANGIKKVEHLYRSKLPDIEISDHLPLHSYCFERVAEFADRPCLIDGATDRTYCFSEVELISRKVAAGLAKLGLQQGQVVMLLLPNCIEFAFVFMGASVRGAIVTTANPFYKPGEIAKQAKAAGARIIVTLAAYVEKLADLQSHDVLVITIDDAPKEGCQHISVLTEADETQCPAVKIHPDDVVALPYSSGTTGLPKGVMLTHKGLVSSVAQQVDGENPNLYFHSDDVILCVLPLFHIYSLNSVLLCALRAGAATLIMQKFNLTTCLELIQKYKVTVAPIVPPIVLDITKSPIVSQYDVSSVRIIMSGAAPLGKELEDALRERFPKAIFGQGYGMTEAGPVLAMNLAFAKNPFPVKSGSCGTVVRNAQIKILDTETGESLPHNQAGEICIRGPEIMKGYINDPESTAATIDEEGWLHTGDVEYIDDDEEIFIVDRVKEIIKYKGFQVAPAELEALLVAHPSIADAAVVPQKHEEAGEVPVAFVVKSSEISEQEIKEFVAKQVIFYKKIHRVYFVDAIPKSPSGKILRKDLRSRLAAK</sequence>
<evidence type="ECO:0000250" key="1">
    <source>
        <dbReference type="UniProtKB" id="O24146"/>
    </source>
</evidence>
<evidence type="ECO:0000250" key="2">
    <source>
        <dbReference type="UniProtKB" id="Q42524"/>
    </source>
</evidence>
<evidence type="ECO:0000305" key="3"/>
<proteinExistence type="evidence at transcript level"/>
<gene>
    <name type="primary">4CL</name>
</gene>
<feature type="chain" id="PRO_0000193035" description="4-coumarate--CoA ligase">
    <location>
        <begin position="1"/>
        <end position="537"/>
    </location>
</feature>
<feature type="region of interest" description="SBD1" evidence="2">
    <location>
        <begin position="262"/>
        <end position="331"/>
    </location>
</feature>
<feature type="region of interest" description="SBD2" evidence="2">
    <location>
        <begin position="332"/>
        <end position="399"/>
    </location>
</feature>
<feature type="binding site" evidence="1">
    <location>
        <position position="189"/>
    </location>
    <ligand>
        <name>ATP</name>
        <dbReference type="ChEBI" id="CHEBI:30616"/>
    </ligand>
</feature>
<feature type="binding site" evidence="1">
    <location>
        <position position="190"/>
    </location>
    <ligand>
        <name>ATP</name>
        <dbReference type="ChEBI" id="CHEBI:30616"/>
    </ligand>
</feature>
<feature type="binding site" evidence="1">
    <location>
        <position position="191"/>
    </location>
    <ligand>
        <name>ATP</name>
        <dbReference type="ChEBI" id="CHEBI:30616"/>
    </ligand>
</feature>
<feature type="binding site" evidence="1">
    <location>
        <position position="192"/>
    </location>
    <ligand>
        <name>ATP</name>
        <dbReference type="ChEBI" id="CHEBI:30616"/>
    </ligand>
</feature>
<feature type="binding site" evidence="1">
    <location>
        <position position="193"/>
    </location>
    <ligand>
        <name>ATP</name>
        <dbReference type="ChEBI" id="CHEBI:30616"/>
    </ligand>
</feature>
<feature type="binding site" evidence="1">
    <location>
        <position position="197"/>
    </location>
    <ligand>
        <name>ATP</name>
        <dbReference type="ChEBI" id="CHEBI:30616"/>
    </ligand>
</feature>
<feature type="binding site" evidence="1">
    <location>
        <position position="239"/>
    </location>
    <ligand>
        <name>(E)-4-coumaroyl-AMP</name>
        <dbReference type="ChEBI" id="CHEBI:192348"/>
    </ligand>
</feature>
<feature type="binding site" evidence="1">
    <location>
        <position position="243"/>
    </location>
    <ligand>
        <name>(E)-4-coumaroyl-AMP</name>
        <dbReference type="ChEBI" id="CHEBI:192348"/>
    </ligand>
</feature>
<feature type="binding site" evidence="1">
    <location>
        <position position="260"/>
    </location>
    <ligand>
        <name>CoA</name>
        <dbReference type="ChEBI" id="CHEBI:57287"/>
    </ligand>
</feature>
<feature type="binding site" evidence="1">
    <location>
        <position position="309"/>
    </location>
    <ligand>
        <name>(E)-4-coumaroyl-AMP</name>
        <dbReference type="ChEBI" id="CHEBI:192348"/>
    </ligand>
</feature>
<feature type="binding site" evidence="1">
    <location>
        <position position="331"/>
    </location>
    <ligand>
        <name>(E)-4-coumaroyl-AMP</name>
        <dbReference type="ChEBI" id="CHEBI:192348"/>
    </ligand>
</feature>
<feature type="binding site" evidence="1">
    <location>
        <position position="331"/>
    </location>
    <ligand>
        <name>ATP</name>
        <dbReference type="ChEBI" id="CHEBI:30616"/>
    </ligand>
</feature>
<feature type="binding site" evidence="1">
    <location>
        <position position="332"/>
    </location>
    <ligand>
        <name>(E)-4-coumaroyl-AMP</name>
        <dbReference type="ChEBI" id="CHEBI:192348"/>
    </ligand>
</feature>
<feature type="binding site" evidence="1">
    <location>
        <position position="332"/>
    </location>
    <ligand>
        <name>ATP</name>
        <dbReference type="ChEBI" id="CHEBI:30616"/>
    </ligand>
</feature>
<feature type="binding site" evidence="1">
    <location>
        <position position="336"/>
    </location>
    <ligand>
        <name>(E)-4-coumaroyl-AMP</name>
        <dbReference type="ChEBI" id="CHEBI:192348"/>
    </ligand>
</feature>
<feature type="binding site" evidence="1">
    <location>
        <position position="336"/>
    </location>
    <ligand>
        <name>ATP</name>
        <dbReference type="ChEBI" id="CHEBI:30616"/>
    </ligand>
</feature>
<feature type="binding site" evidence="1">
    <location>
        <position position="344"/>
    </location>
    <ligand>
        <name>(E)-4-coumaroyl-AMP</name>
        <dbReference type="ChEBI" id="CHEBI:192348"/>
    </ligand>
</feature>
<feature type="binding site" evidence="1">
    <location>
        <position position="420"/>
    </location>
    <ligand>
        <name>ATP</name>
        <dbReference type="ChEBI" id="CHEBI:30616"/>
    </ligand>
</feature>
<feature type="binding site" evidence="1">
    <location>
        <position position="435"/>
    </location>
    <ligand>
        <name>ATP</name>
        <dbReference type="ChEBI" id="CHEBI:30616"/>
    </ligand>
</feature>
<feature type="binding site" evidence="1">
    <location>
        <position position="437"/>
    </location>
    <ligand>
        <name>(E)-4-coumaroyl-AMP</name>
        <dbReference type="ChEBI" id="CHEBI:192348"/>
    </ligand>
</feature>
<feature type="binding site" evidence="1">
    <location>
        <position position="441"/>
    </location>
    <ligand>
        <name>(E)-4-coumaroyl-AMP</name>
        <dbReference type="ChEBI" id="CHEBI:192348"/>
    </ligand>
</feature>
<feature type="binding site" evidence="1">
    <location>
        <position position="443"/>
    </location>
    <ligand>
        <name>CoA</name>
        <dbReference type="ChEBI" id="CHEBI:57287"/>
    </ligand>
</feature>
<feature type="binding site" evidence="1">
    <location>
        <position position="444"/>
    </location>
    <ligand>
        <name>CoA</name>
        <dbReference type="ChEBI" id="CHEBI:57287"/>
    </ligand>
</feature>
<feature type="binding site" evidence="1">
    <location>
        <position position="524"/>
    </location>
    <ligand>
        <name>ATP</name>
        <dbReference type="ChEBI" id="CHEBI:30616"/>
    </ligand>
</feature>
<feature type="sequence variant">
    <original>E</original>
    <variation>G</variation>
    <location>
        <position position="422"/>
    </location>
</feature>
<keyword id="KW-0067">ATP-binding</keyword>
<keyword id="KW-0436">Ligase</keyword>
<keyword id="KW-0460">Magnesium</keyword>
<keyword id="KW-0547">Nucleotide-binding</keyword>
<keyword id="KW-0587">Phenylpropanoid metabolism</keyword>
<comment type="function">
    <text evidence="1">Carboxylate--CoA ligase that may use 4-coumarate as substrate. Follows a two-step reaction mechanism, wherein the carboxylate substrate first undergoes adenylation by ATP, followed by a thioesterification in the presence of CoA to yield the final CoA thioester.</text>
</comment>
<comment type="catalytic activity">
    <reaction evidence="1">
        <text>(E)-4-coumarate + ATP + CoA = (E)-4-coumaroyl-CoA + AMP + diphosphate</text>
        <dbReference type="Rhea" id="RHEA:19641"/>
        <dbReference type="ChEBI" id="CHEBI:12876"/>
        <dbReference type="ChEBI" id="CHEBI:30616"/>
        <dbReference type="ChEBI" id="CHEBI:33019"/>
        <dbReference type="ChEBI" id="CHEBI:57287"/>
        <dbReference type="ChEBI" id="CHEBI:85008"/>
        <dbReference type="ChEBI" id="CHEBI:456215"/>
        <dbReference type="EC" id="6.2.1.12"/>
    </reaction>
    <physiologicalReaction direction="left-to-right" evidence="1">
        <dbReference type="Rhea" id="RHEA:19642"/>
    </physiologicalReaction>
</comment>
<comment type="catalytic activity">
    <reaction evidence="1">
        <text>(E)-4-coumarate + ATP + H(+) = (E)-4-coumaroyl-AMP + diphosphate</text>
        <dbReference type="Rhea" id="RHEA:72419"/>
        <dbReference type="ChEBI" id="CHEBI:12876"/>
        <dbReference type="ChEBI" id="CHEBI:15378"/>
        <dbReference type="ChEBI" id="CHEBI:30616"/>
        <dbReference type="ChEBI" id="CHEBI:33019"/>
        <dbReference type="ChEBI" id="CHEBI:192348"/>
    </reaction>
    <physiologicalReaction direction="left-to-right" evidence="1">
        <dbReference type="Rhea" id="RHEA:72420"/>
    </physiologicalReaction>
</comment>
<comment type="catalytic activity">
    <reaction evidence="1">
        <text>(E)-4-coumaroyl-AMP + CoA = (E)-4-coumaroyl-CoA + AMP + H(+)</text>
        <dbReference type="Rhea" id="RHEA:72423"/>
        <dbReference type="ChEBI" id="CHEBI:15378"/>
        <dbReference type="ChEBI" id="CHEBI:57287"/>
        <dbReference type="ChEBI" id="CHEBI:85008"/>
        <dbReference type="ChEBI" id="CHEBI:192348"/>
        <dbReference type="ChEBI" id="CHEBI:456215"/>
    </reaction>
    <physiologicalReaction direction="left-to-right" evidence="1">
        <dbReference type="Rhea" id="RHEA:72424"/>
    </physiologicalReaction>
</comment>
<comment type="cofactor">
    <cofactor evidence="1">
        <name>Mg(2+)</name>
        <dbReference type="ChEBI" id="CHEBI:18420"/>
    </cofactor>
</comment>
<comment type="pathway">
    <text evidence="2">Phytoalexin biosynthesis; 3,4',5-trihydroxystilbene biosynthesis; 3,4',5-trihydroxystilbene from trans-4-coumarate: step 1/2.</text>
</comment>
<comment type="domain">
    <text evidence="2">Both substrate-binding domains (SBD1 and SBD2) are involved in the substrate recognition, and are sufficient to confer the substrate specificity.</text>
</comment>
<comment type="similarity">
    <text evidence="3">Belongs to the ATP-dependent AMP-binding enzyme family.</text>
</comment>
<dbReference type="EC" id="6.2.1.12" evidence="1"/>
<dbReference type="EMBL" id="U12012">
    <property type="protein sequence ID" value="AAA92668.1"/>
    <property type="molecule type" value="mRNA"/>
</dbReference>
<dbReference type="EMBL" id="U12013">
    <property type="protein sequence ID" value="AAA92669.1"/>
    <property type="molecule type" value="mRNA"/>
</dbReference>
<dbReference type="EMBL" id="U39404">
    <property type="protein sequence ID" value="AAB42382.1"/>
    <property type="molecule type" value="Genomic_DNA"/>
</dbReference>
<dbReference type="EMBL" id="U39405">
    <property type="protein sequence ID" value="AAB42383.1"/>
    <property type="molecule type" value="Genomic_DNA"/>
</dbReference>
<dbReference type="PIR" id="T09710">
    <property type="entry name" value="T09710"/>
</dbReference>
<dbReference type="PIR" id="T09755">
    <property type="entry name" value="T09755"/>
</dbReference>
<dbReference type="SMR" id="P41636"/>
<dbReference type="BRENDA" id="6.2.1.12">
    <property type="organism ID" value="4861"/>
</dbReference>
<dbReference type="UniPathway" id="UPA00372">
    <property type="reaction ID" value="UER00547"/>
</dbReference>
<dbReference type="GO" id="GO:0016207">
    <property type="term" value="F:4-coumarate-CoA ligase activity"/>
    <property type="evidence" value="ECO:0007669"/>
    <property type="project" value="UniProtKB-EC"/>
</dbReference>
<dbReference type="GO" id="GO:0005524">
    <property type="term" value="F:ATP binding"/>
    <property type="evidence" value="ECO:0007669"/>
    <property type="project" value="UniProtKB-KW"/>
</dbReference>
<dbReference type="GO" id="GO:0009698">
    <property type="term" value="P:phenylpropanoid metabolic process"/>
    <property type="evidence" value="ECO:0007669"/>
    <property type="project" value="UniProtKB-KW"/>
</dbReference>
<dbReference type="CDD" id="cd05904">
    <property type="entry name" value="4CL"/>
    <property type="match status" value="1"/>
</dbReference>
<dbReference type="FunFam" id="3.30.300.30:FF:000007">
    <property type="entry name" value="4-coumarate--CoA ligase 2"/>
    <property type="match status" value="1"/>
</dbReference>
<dbReference type="FunFam" id="3.40.50.12780:FF:000003">
    <property type="entry name" value="Long-chain-fatty-acid--CoA ligase FadD"/>
    <property type="match status" value="1"/>
</dbReference>
<dbReference type="Gene3D" id="3.30.300.30">
    <property type="match status" value="1"/>
</dbReference>
<dbReference type="Gene3D" id="3.40.50.12780">
    <property type="entry name" value="N-terminal domain of ligase-like"/>
    <property type="match status" value="1"/>
</dbReference>
<dbReference type="InterPro" id="IPR025110">
    <property type="entry name" value="AMP-bd_C"/>
</dbReference>
<dbReference type="InterPro" id="IPR045851">
    <property type="entry name" value="AMP-bd_C_sf"/>
</dbReference>
<dbReference type="InterPro" id="IPR020845">
    <property type="entry name" value="AMP-binding_CS"/>
</dbReference>
<dbReference type="InterPro" id="IPR000873">
    <property type="entry name" value="AMP-dep_synth/lig_dom"/>
</dbReference>
<dbReference type="InterPro" id="IPR042099">
    <property type="entry name" value="ANL_N_sf"/>
</dbReference>
<dbReference type="PANTHER" id="PTHR24096:SF149">
    <property type="entry name" value="AMP-BINDING DOMAIN-CONTAINING PROTEIN-RELATED"/>
    <property type="match status" value="1"/>
</dbReference>
<dbReference type="PANTHER" id="PTHR24096">
    <property type="entry name" value="LONG-CHAIN-FATTY-ACID--COA LIGASE"/>
    <property type="match status" value="1"/>
</dbReference>
<dbReference type="Pfam" id="PF00501">
    <property type="entry name" value="AMP-binding"/>
    <property type="match status" value="1"/>
</dbReference>
<dbReference type="Pfam" id="PF13193">
    <property type="entry name" value="AMP-binding_C"/>
    <property type="match status" value="1"/>
</dbReference>
<dbReference type="SUPFAM" id="SSF56801">
    <property type="entry name" value="Acetyl-CoA synthetase-like"/>
    <property type="match status" value="1"/>
</dbReference>
<dbReference type="PROSITE" id="PS00455">
    <property type="entry name" value="AMP_BINDING"/>
    <property type="match status" value="1"/>
</dbReference>
<reference key="1">
    <citation type="submission" date="1994-07" db="EMBL/GenBank/DDBJ databases">
        <authorList>
            <person name="Voo K.S."/>
        </authorList>
    </citation>
    <scope>NUCLEOTIDE SEQUENCE [MRNA]</scope>
    <source>
        <strain>L.</strain>
        <tissue>Xylem</tissue>
    </source>
</reference>
<reference key="2">
    <citation type="journal article" date="1997" name="Plant Physiol.">
        <title>Molecular cloning of 4-coumarate:coenzyme A ligase in loblolly pine and the roles of this enzyme in the biosynthesis of lignin in compression wood.</title>
        <authorList>
            <person name="Zhang X.H."/>
            <person name="Chiang V.L."/>
        </authorList>
    </citation>
    <scope>NUCLEOTIDE SEQUENCE [GENOMIC DNA]</scope>
    <source>
        <tissue>Needle</tissue>
    </source>
</reference>